<name>MFNA_HALSA</name>
<evidence type="ECO:0000255" key="1">
    <source>
        <dbReference type="HAMAP-Rule" id="MF_01610"/>
    </source>
</evidence>
<feature type="chain" id="PRO_0000147021" description="Probable L-aspartate decarboxylase">
    <location>
        <begin position="1"/>
        <end position="355"/>
    </location>
</feature>
<feature type="modified residue" description="N6-(pyridoxal phosphate)lysine" evidence="1">
    <location>
        <position position="210"/>
    </location>
</feature>
<dbReference type="EC" id="4.1.1.11" evidence="1"/>
<dbReference type="EMBL" id="AE004437">
    <property type="protein sequence ID" value="AAG18904.1"/>
    <property type="molecule type" value="Genomic_DNA"/>
</dbReference>
<dbReference type="PIR" id="D84192">
    <property type="entry name" value="D84192"/>
</dbReference>
<dbReference type="RefSeq" id="WP_010902198.1">
    <property type="nucleotide sequence ID" value="NC_002607.1"/>
</dbReference>
<dbReference type="SMR" id="Q9HSA3"/>
<dbReference type="FunCoup" id="Q9HSA3">
    <property type="interactions" value="144"/>
</dbReference>
<dbReference type="STRING" id="64091.VNG_0327G"/>
<dbReference type="PaxDb" id="64091-VNG_0327G"/>
<dbReference type="GeneID" id="68693271"/>
<dbReference type="KEGG" id="hal:VNG_0327G"/>
<dbReference type="PATRIC" id="fig|64091.14.peg.243"/>
<dbReference type="HOGENOM" id="CLU_028929_2_1_2"/>
<dbReference type="InParanoid" id="Q9HSA3"/>
<dbReference type="OrthoDB" id="56891at2157"/>
<dbReference type="PhylomeDB" id="Q9HSA3"/>
<dbReference type="UniPathway" id="UPA00241"/>
<dbReference type="Proteomes" id="UP000000554">
    <property type="component" value="Chromosome"/>
</dbReference>
<dbReference type="GO" id="GO:0004068">
    <property type="term" value="F:aspartate 1-decarboxylase activity"/>
    <property type="evidence" value="ECO:0000318"/>
    <property type="project" value="GO_Central"/>
</dbReference>
<dbReference type="GO" id="GO:0030170">
    <property type="term" value="F:pyridoxal phosphate binding"/>
    <property type="evidence" value="ECO:0007669"/>
    <property type="project" value="UniProtKB-UniRule"/>
</dbReference>
<dbReference type="GO" id="GO:0019752">
    <property type="term" value="P:carboxylic acid metabolic process"/>
    <property type="evidence" value="ECO:0007669"/>
    <property type="project" value="InterPro"/>
</dbReference>
<dbReference type="GO" id="GO:0015937">
    <property type="term" value="P:coenzyme A biosynthetic process"/>
    <property type="evidence" value="ECO:0000318"/>
    <property type="project" value="GO_Central"/>
</dbReference>
<dbReference type="Gene3D" id="3.90.1150.10">
    <property type="entry name" value="Aspartate Aminotransferase, domain 1"/>
    <property type="match status" value="1"/>
</dbReference>
<dbReference type="Gene3D" id="3.40.640.10">
    <property type="entry name" value="Type I PLP-dependent aspartate aminotransferase-like (Major domain)"/>
    <property type="match status" value="1"/>
</dbReference>
<dbReference type="HAMAP" id="MF_01610">
    <property type="entry name" value="MfnA_decarbox"/>
    <property type="match status" value="1"/>
</dbReference>
<dbReference type="InterPro" id="IPR050477">
    <property type="entry name" value="GrpII_AminoAcid_Decarb"/>
</dbReference>
<dbReference type="InterPro" id="IPR020931">
    <property type="entry name" value="MfnA"/>
</dbReference>
<dbReference type="InterPro" id="IPR002129">
    <property type="entry name" value="PyrdxlP-dep_de-COase"/>
</dbReference>
<dbReference type="InterPro" id="IPR015424">
    <property type="entry name" value="PyrdxlP-dep_Trfase"/>
</dbReference>
<dbReference type="InterPro" id="IPR015421">
    <property type="entry name" value="PyrdxlP-dep_Trfase_major"/>
</dbReference>
<dbReference type="InterPro" id="IPR015422">
    <property type="entry name" value="PyrdxlP-dep_Trfase_small"/>
</dbReference>
<dbReference type="NCBIfam" id="TIGR03812">
    <property type="entry name" value="tyr_de_CO2_Arch"/>
    <property type="match status" value="1"/>
</dbReference>
<dbReference type="PANTHER" id="PTHR42735">
    <property type="match status" value="1"/>
</dbReference>
<dbReference type="PANTHER" id="PTHR42735:SF6">
    <property type="entry name" value="SPHINGOSINE-1-PHOSPHATE LYASE 1"/>
    <property type="match status" value="1"/>
</dbReference>
<dbReference type="Pfam" id="PF00282">
    <property type="entry name" value="Pyridoxal_deC"/>
    <property type="match status" value="1"/>
</dbReference>
<dbReference type="SUPFAM" id="SSF53383">
    <property type="entry name" value="PLP-dependent transferases"/>
    <property type="match status" value="1"/>
</dbReference>
<gene>
    <name evidence="1" type="primary">mfnA</name>
    <name type="ordered locus">VNG_0327G</name>
</gene>
<keyword id="KW-0210">Decarboxylase</keyword>
<keyword id="KW-0456">Lyase</keyword>
<keyword id="KW-0663">Pyridoxal phosphate</keyword>
<keyword id="KW-1185">Reference proteome</keyword>
<proteinExistence type="inferred from homology"/>
<sequence length="355" mass="37357">MTRGEARRPPQEFDRVLSSMCTTPHPAAREAAQAFLATNPGDPETYPAVAERERDAVALLGEIVGLSSPHGYIAAGGTEANLQAVRAARNRADADAVNVVAPASAHFSFQKAADVLGVELRLAPTDGDHRADVAAVADLVDGDTAVVVGVAGTTEYGRVDPIPALADIAAGVDANLHVDAAWGGFVLPFTDHDWSFADAPVNTMAIDPHKMGQAPVPAGGFLARDPETLDALAIETPYLESDTQPTLGGTRSGAGVAGALASLRALWPDGYREQYERTQGNAEYLAAELAARGYDVVDPELPLVAADMPDAEFQALREEGWRISRTASDALRVVCMPHVTREMLAAFLDDVDALA</sequence>
<reference key="1">
    <citation type="journal article" date="2000" name="Proc. Natl. Acad. Sci. U.S.A.">
        <title>Genome sequence of Halobacterium species NRC-1.</title>
        <authorList>
            <person name="Ng W.V."/>
            <person name="Kennedy S.P."/>
            <person name="Mahairas G.G."/>
            <person name="Berquist B."/>
            <person name="Pan M."/>
            <person name="Shukla H.D."/>
            <person name="Lasky S.R."/>
            <person name="Baliga N.S."/>
            <person name="Thorsson V."/>
            <person name="Sbrogna J."/>
            <person name="Swartzell S."/>
            <person name="Weir D."/>
            <person name="Hall J."/>
            <person name="Dahl T.A."/>
            <person name="Welti R."/>
            <person name="Goo Y.A."/>
            <person name="Leithauser B."/>
            <person name="Keller K."/>
            <person name="Cruz R."/>
            <person name="Danson M.J."/>
            <person name="Hough D.W."/>
            <person name="Maddocks D.G."/>
            <person name="Jablonski P.E."/>
            <person name="Krebs M.P."/>
            <person name="Angevine C.M."/>
            <person name="Dale H."/>
            <person name="Isenbarger T.A."/>
            <person name="Peck R.F."/>
            <person name="Pohlschroder M."/>
            <person name="Spudich J.L."/>
            <person name="Jung K.-H."/>
            <person name="Alam M."/>
            <person name="Freitas T."/>
            <person name="Hou S."/>
            <person name="Daniels C.J."/>
            <person name="Dennis P.P."/>
            <person name="Omer A.D."/>
            <person name="Ebhardt H."/>
            <person name="Lowe T.M."/>
            <person name="Liang P."/>
            <person name="Riley M."/>
            <person name="Hood L."/>
            <person name="DasSarma S."/>
        </authorList>
    </citation>
    <scope>NUCLEOTIDE SEQUENCE [LARGE SCALE GENOMIC DNA]</scope>
    <source>
        <strain>ATCC 700922 / JCM 11081 / NRC-1</strain>
    </source>
</reference>
<comment type="function">
    <text evidence="1">Catalyzes the decarboxylation of L-aspartate to produce beta-alanine.</text>
</comment>
<comment type="catalytic activity">
    <reaction evidence="1">
        <text>L-aspartate + H(+) = beta-alanine + CO2</text>
        <dbReference type="Rhea" id="RHEA:19497"/>
        <dbReference type="ChEBI" id="CHEBI:15378"/>
        <dbReference type="ChEBI" id="CHEBI:16526"/>
        <dbReference type="ChEBI" id="CHEBI:29991"/>
        <dbReference type="ChEBI" id="CHEBI:57966"/>
        <dbReference type="EC" id="4.1.1.11"/>
    </reaction>
</comment>
<comment type="cofactor">
    <cofactor evidence="1">
        <name>pyridoxal 5'-phosphate</name>
        <dbReference type="ChEBI" id="CHEBI:597326"/>
    </cofactor>
</comment>
<comment type="pathway">
    <text evidence="1">Cofactor biosynthesis; coenzyme A biosynthesis.</text>
</comment>
<comment type="similarity">
    <text evidence="1">Belongs to the group II decarboxylase family. MfnA subfamily.</text>
</comment>
<protein>
    <recommendedName>
        <fullName evidence="1">Probable L-aspartate decarboxylase</fullName>
        <shortName evidence="1">ADC</shortName>
        <ecNumber evidence="1">4.1.1.11</ecNumber>
    </recommendedName>
</protein>
<accession>Q9HSA3</accession>
<organism>
    <name type="scientific">Halobacterium salinarum (strain ATCC 700922 / JCM 11081 / NRC-1)</name>
    <name type="common">Halobacterium halobium</name>
    <dbReference type="NCBI Taxonomy" id="64091"/>
    <lineage>
        <taxon>Archaea</taxon>
        <taxon>Methanobacteriati</taxon>
        <taxon>Methanobacteriota</taxon>
        <taxon>Stenosarchaea group</taxon>
        <taxon>Halobacteria</taxon>
        <taxon>Halobacteriales</taxon>
        <taxon>Halobacteriaceae</taxon>
        <taxon>Halobacterium</taxon>
        <taxon>Halobacterium salinarum NRC-34001</taxon>
    </lineage>
</organism>